<gene>
    <name evidence="1" type="primary">rimP</name>
    <name type="ordered locus">Cthe_0995</name>
</gene>
<evidence type="ECO:0000255" key="1">
    <source>
        <dbReference type="HAMAP-Rule" id="MF_01077"/>
    </source>
</evidence>
<sequence length="154" mass="17863">MTRKEIEEIVTEIANPVVNKHSFELVDVEFIKEGSSWYLRIYIDKPGGITIDDCQVVSEEISDILDKEDPIPHSYFLEVSSPGLDRPLKKESDFERFKGELVEVKVFKPIEGKKIFEGELVGYKDNKIIIKKNGNELMEFERDKVALVRRVIKF</sequence>
<accession>A3DE48</accession>
<feature type="chain" id="PRO_0000384632" description="Ribosome maturation factor RimP">
    <location>
        <begin position="1"/>
        <end position="154"/>
    </location>
</feature>
<comment type="function">
    <text evidence="1">Required for maturation of 30S ribosomal subunits.</text>
</comment>
<comment type="subcellular location">
    <subcellularLocation>
        <location evidence="1">Cytoplasm</location>
    </subcellularLocation>
</comment>
<comment type="similarity">
    <text evidence="1">Belongs to the RimP family.</text>
</comment>
<keyword id="KW-0963">Cytoplasm</keyword>
<keyword id="KW-1185">Reference proteome</keyword>
<keyword id="KW-0690">Ribosome biogenesis</keyword>
<organism>
    <name type="scientific">Acetivibrio thermocellus (strain ATCC 27405 / DSM 1237 / JCM 9322 / NBRC 103400 / NCIMB 10682 / NRRL B-4536 / VPI 7372)</name>
    <name type="common">Clostridium thermocellum</name>
    <dbReference type="NCBI Taxonomy" id="203119"/>
    <lineage>
        <taxon>Bacteria</taxon>
        <taxon>Bacillati</taxon>
        <taxon>Bacillota</taxon>
        <taxon>Clostridia</taxon>
        <taxon>Eubacteriales</taxon>
        <taxon>Oscillospiraceae</taxon>
        <taxon>Acetivibrio</taxon>
    </lineage>
</organism>
<name>RIMP_ACET2</name>
<reference key="1">
    <citation type="submission" date="2007-02" db="EMBL/GenBank/DDBJ databases">
        <title>Complete sequence of Clostridium thermocellum ATCC 27405.</title>
        <authorList>
            <consortium name="US DOE Joint Genome Institute"/>
            <person name="Copeland A."/>
            <person name="Lucas S."/>
            <person name="Lapidus A."/>
            <person name="Barry K."/>
            <person name="Detter J.C."/>
            <person name="Glavina del Rio T."/>
            <person name="Hammon N."/>
            <person name="Israni S."/>
            <person name="Dalin E."/>
            <person name="Tice H."/>
            <person name="Pitluck S."/>
            <person name="Chertkov O."/>
            <person name="Brettin T."/>
            <person name="Bruce D."/>
            <person name="Han C."/>
            <person name="Tapia R."/>
            <person name="Gilna P."/>
            <person name="Schmutz J."/>
            <person name="Larimer F."/>
            <person name="Land M."/>
            <person name="Hauser L."/>
            <person name="Kyrpides N."/>
            <person name="Mikhailova N."/>
            <person name="Wu J.H.D."/>
            <person name="Newcomb M."/>
            <person name="Richardson P."/>
        </authorList>
    </citation>
    <scope>NUCLEOTIDE SEQUENCE [LARGE SCALE GENOMIC DNA]</scope>
    <source>
        <strain>ATCC 27405 / DSM 1237 / JCM 9322 / NBRC 103400 / NCIMB 10682 / NRRL B-4536 / VPI 7372</strain>
    </source>
</reference>
<proteinExistence type="inferred from homology"/>
<dbReference type="EMBL" id="CP000568">
    <property type="protein sequence ID" value="ABN52227.1"/>
    <property type="molecule type" value="Genomic_DNA"/>
</dbReference>
<dbReference type="RefSeq" id="WP_003515546.1">
    <property type="nucleotide sequence ID" value="NC_009012.1"/>
</dbReference>
<dbReference type="SMR" id="A3DE48"/>
<dbReference type="STRING" id="203119.Cthe_0995"/>
<dbReference type="GeneID" id="35805811"/>
<dbReference type="KEGG" id="cth:Cthe_0995"/>
<dbReference type="eggNOG" id="COG0779">
    <property type="taxonomic scope" value="Bacteria"/>
</dbReference>
<dbReference type="HOGENOM" id="CLU_070525_2_2_9"/>
<dbReference type="OrthoDB" id="9805006at2"/>
<dbReference type="Proteomes" id="UP000002145">
    <property type="component" value="Chromosome"/>
</dbReference>
<dbReference type="GO" id="GO:0005829">
    <property type="term" value="C:cytosol"/>
    <property type="evidence" value="ECO:0007669"/>
    <property type="project" value="TreeGrafter"/>
</dbReference>
<dbReference type="GO" id="GO:0000028">
    <property type="term" value="P:ribosomal small subunit assembly"/>
    <property type="evidence" value="ECO:0007669"/>
    <property type="project" value="TreeGrafter"/>
</dbReference>
<dbReference type="GO" id="GO:0006412">
    <property type="term" value="P:translation"/>
    <property type="evidence" value="ECO:0007669"/>
    <property type="project" value="TreeGrafter"/>
</dbReference>
<dbReference type="CDD" id="cd01734">
    <property type="entry name" value="YlxS_C"/>
    <property type="match status" value="1"/>
</dbReference>
<dbReference type="FunFam" id="3.30.300.70:FF:000001">
    <property type="entry name" value="Ribosome maturation factor RimP"/>
    <property type="match status" value="1"/>
</dbReference>
<dbReference type="Gene3D" id="2.30.30.180">
    <property type="entry name" value="Ribosome maturation factor RimP, C-terminal domain"/>
    <property type="match status" value="1"/>
</dbReference>
<dbReference type="Gene3D" id="3.30.300.70">
    <property type="entry name" value="RimP-like superfamily, N-terminal"/>
    <property type="match status" value="1"/>
</dbReference>
<dbReference type="HAMAP" id="MF_01077">
    <property type="entry name" value="RimP"/>
    <property type="match status" value="1"/>
</dbReference>
<dbReference type="InterPro" id="IPR003728">
    <property type="entry name" value="Ribosome_maturation_RimP"/>
</dbReference>
<dbReference type="InterPro" id="IPR028998">
    <property type="entry name" value="RimP_C"/>
</dbReference>
<dbReference type="InterPro" id="IPR036847">
    <property type="entry name" value="RimP_C_sf"/>
</dbReference>
<dbReference type="InterPro" id="IPR028989">
    <property type="entry name" value="RimP_N"/>
</dbReference>
<dbReference type="InterPro" id="IPR035956">
    <property type="entry name" value="RimP_N_sf"/>
</dbReference>
<dbReference type="NCBIfam" id="NF000928">
    <property type="entry name" value="PRK00092.1-2"/>
    <property type="match status" value="1"/>
</dbReference>
<dbReference type="PANTHER" id="PTHR33867">
    <property type="entry name" value="RIBOSOME MATURATION FACTOR RIMP"/>
    <property type="match status" value="1"/>
</dbReference>
<dbReference type="PANTHER" id="PTHR33867:SF1">
    <property type="entry name" value="RIBOSOME MATURATION FACTOR RIMP"/>
    <property type="match status" value="1"/>
</dbReference>
<dbReference type="Pfam" id="PF17384">
    <property type="entry name" value="DUF150_C"/>
    <property type="match status" value="1"/>
</dbReference>
<dbReference type="Pfam" id="PF02576">
    <property type="entry name" value="RimP_N"/>
    <property type="match status" value="1"/>
</dbReference>
<dbReference type="SUPFAM" id="SSF74942">
    <property type="entry name" value="YhbC-like, C-terminal domain"/>
    <property type="match status" value="1"/>
</dbReference>
<dbReference type="SUPFAM" id="SSF75420">
    <property type="entry name" value="YhbC-like, N-terminal domain"/>
    <property type="match status" value="1"/>
</dbReference>
<protein>
    <recommendedName>
        <fullName evidence="1">Ribosome maturation factor RimP</fullName>
    </recommendedName>
</protein>